<evidence type="ECO:0000255" key="1">
    <source>
        <dbReference type="HAMAP-Rule" id="MF_00174"/>
    </source>
</evidence>
<dbReference type="EC" id="6.3.2.-" evidence="1"/>
<dbReference type="EMBL" id="BA000031">
    <property type="protein sequence ID" value="BAC61101.1"/>
    <property type="molecule type" value="Genomic_DNA"/>
</dbReference>
<dbReference type="RefSeq" id="NP_799217.1">
    <property type="nucleotide sequence ID" value="NC_004603.1"/>
</dbReference>
<dbReference type="RefSeq" id="WP_005456968.1">
    <property type="nucleotide sequence ID" value="NC_004603.1"/>
</dbReference>
<dbReference type="SMR" id="Q87KY6"/>
<dbReference type="GeneID" id="1190401"/>
<dbReference type="KEGG" id="vpa:VP2838"/>
<dbReference type="PATRIC" id="fig|223926.6.peg.2730"/>
<dbReference type="eggNOG" id="COG2269">
    <property type="taxonomic scope" value="Bacteria"/>
</dbReference>
<dbReference type="HOGENOM" id="CLU_008255_1_1_6"/>
<dbReference type="Proteomes" id="UP000002493">
    <property type="component" value="Chromosome 1"/>
</dbReference>
<dbReference type="GO" id="GO:0005829">
    <property type="term" value="C:cytosol"/>
    <property type="evidence" value="ECO:0007669"/>
    <property type="project" value="TreeGrafter"/>
</dbReference>
<dbReference type="GO" id="GO:0016880">
    <property type="term" value="F:acid-ammonia (or amide) ligase activity"/>
    <property type="evidence" value="ECO:0007669"/>
    <property type="project" value="UniProtKB-UniRule"/>
</dbReference>
<dbReference type="GO" id="GO:0005524">
    <property type="term" value="F:ATP binding"/>
    <property type="evidence" value="ECO:0007669"/>
    <property type="project" value="UniProtKB-UniRule"/>
</dbReference>
<dbReference type="GO" id="GO:0004824">
    <property type="term" value="F:lysine-tRNA ligase activity"/>
    <property type="evidence" value="ECO:0007669"/>
    <property type="project" value="InterPro"/>
</dbReference>
<dbReference type="GO" id="GO:0000049">
    <property type="term" value="F:tRNA binding"/>
    <property type="evidence" value="ECO:0007669"/>
    <property type="project" value="TreeGrafter"/>
</dbReference>
<dbReference type="GO" id="GO:0006430">
    <property type="term" value="P:lysyl-tRNA aminoacylation"/>
    <property type="evidence" value="ECO:0007669"/>
    <property type="project" value="InterPro"/>
</dbReference>
<dbReference type="FunFam" id="3.30.930.10:FF:000017">
    <property type="entry name" value="Elongation factor P--(R)-beta-lysine ligase"/>
    <property type="match status" value="1"/>
</dbReference>
<dbReference type="Gene3D" id="3.30.930.10">
    <property type="entry name" value="Bira Bifunctional Protein, Domain 2"/>
    <property type="match status" value="1"/>
</dbReference>
<dbReference type="HAMAP" id="MF_00174">
    <property type="entry name" value="EF_P_modif_A"/>
    <property type="match status" value="1"/>
</dbReference>
<dbReference type="InterPro" id="IPR004364">
    <property type="entry name" value="Aa-tRNA-synt_II"/>
</dbReference>
<dbReference type="InterPro" id="IPR006195">
    <property type="entry name" value="aa-tRNA-synth_II"/>
</dbReference>
<dbReference type="InterPro" id="IPR045864">
    <property type="entry name" value="aa-tRNA-synth_II/BPL/LPL"/>
</dbReference>
<dbReference type="InterPro" id="IPR004525">
    <property type="entry name" value="EpmA"/>
</dbReference>
<dbReference type="NCBIfam" id="TIGR00462">
    <property type="entry name" value="genX"/>
    <property type="match status" value="1"/>
</dbReference>
<dbReference type="NCBIfam" id="NF006828">
    <property type="entry name" value="PRK09350.1"/>
    <property type="match status" value="1"/>
</dbReference>
<dbReference type="PANTHER" id="PTHR42918:SF6">
    <property type="entry name" value="ELONGATION FACTOR P--(R)-BETA-LYSINE LIGASE"/>
    <property type="match status" value="1"/>
</dbReference>
<dbReference type="PANTHER" id="PTHR42918">
    <property type="entry name" value="LYSYL-TRNA SYNTHETASE"/>
    <property type="match status" value="1"/>
</dbReference>
<dbReference type="Pfam" id="PF00152">
    <property type="entry name" value="tRNA-synt_2"/>
    <property type="match status" value="1"/>
</dbReference>
<dbReference type="SUPFAM" id="SSF55681">
    <property type="entry name" value="Class II aaRS and biotin synthetases"/>
    <property type="match status" value="1"/>
</dbReference>
<dbReference type="PROSITE" id="PS50862">
    <property type="entry name" value="AA_TRNA_LIGASE_II"/>
    <property type="match status" value="1"/>
</dbReference>
<reference key="1">
    <citation type="journal article" date="2003" name="Lancet">
        <title>Genome sequence of Vibrio parahaemolyticus: a pathogenic mechanism distinct from that of V. cholerae.</title>
        <authorList>
            <person name="Makino K."/>
            <person name="Oshima K."/>
            <person name="Kurokawa K."/>
            <person name="Yokoyama K."/>
            <person name="Uda T."/>
            <person name="Tagomori K."/>
            <person name="Iijima Y."/>
            <person name="Najima M."/>
            <person name="Nakano M."/>
            <person name="Yamashita A."/>
            <person name="Kubota Y."/>
            <person name="Kimura S."/>
            <person name="Yasunaga T."/>
            <person name="Honda T."/>
            <person name="Shinagawa H."/>
            <person name="Hattori M."/>
            <person name="Iida T."/>
        </authorList>
    </citation>
    <scope>NUCLEOTIDE SEQUENCE [LARGE SCALE GENOMIC DNA]</scope>
    <source>
        <strain>RIMD 2210633</strain>
    </source>
</reference>
<name>EPMA_VIBPA</name>
<keyword id="KW-0067">ATP-binding</keyword>
<keyword id="KW-0436">Ligase</keyword>
<keyword id="KW-0547">Nucleotide-binding</keyword>
<gene>
    <name evidence="1" type="primary">epmA</name>
    <name type="synonym">yjeA</name>
    <name type="ordered locus">VP2838</name>
</gene>
<proteinExistence type="inferred from homology"/>
<accession>Q87KY6</accession>
<comment type="function">
    <text evidence="1">With EpmB is involved in the beta-lysylation step of the post-translational modification of translation elongation factor P (EF-P). Catalyzes the ATP-dependent activation of (R)-beta-lysine produced by EpmB, forming a lysyl-adenylate, from which the beta-lysyl moiety is then transferred to the epsilon-amino group of a conserved specific lysine residue in EF-P.</text>
</comment>
<comment type="catalytic activity">
    <reaction evidence="1">
        <text>D-beta-lysine + L-lysyl-[protein] + ATP = N(6)-((3R)-3,6-diaminohexanoyl)-L-lysyl-[protein] + AMP + diphosphate + H(+)</text>
        <dbReference type="Rhea" id="RHEA:83435"/>
        <dbReference type="Rhea" id="RHEA-COMP:9752"/>
        <dbReference type="Rhea" id="RHEA-COMP:20131"/>
        <dbReference type="ChEBI" id="CHEBI:15378"/>
        <dbReference type="ChEBI" id="CHEBI:29969"/>
        <dbReference type="ChEBI" id="CHEBI:30616"/>
        <dbReference type="ChEBI" id="CHEBI:33019"/>
        <dbReference type="ChEBI" id="CHEBI:84138"/>
        <dbReference type="ChEBI" id="CHEBI:156053"/>
        <dbReference type="ChEBI" id="CHEBI:456215"/>
    </reaction>
    <physiologicalReaction direction="left-to-right" evidence="1">
        <dbReference type="Rhea" id="RHEA:83436"/>
    </physiologicalReaction>
</comment>
<comment type="subunit">
    <text evidence="1">Homodimer.</text>
</comment>
<comment type="similarity">
    <text evidence="1">Belongs to the class-II aminoacyl-tRNA synthetase family. EpmA subfamily.</text>
</comment>
<feature type="chain" id="PRO_0000152731" description="Elongation factor P--(R)-beta-lysine ligase">
    <location>
        <begin position="1"/>
        <end position="323"/>
    </location>
</feature>
<feature type="binding site" evidence="1">
    <location>
        <begin position="74"/>
        <end position="76"/>
    </location>
    <ligand>
        <name>substrate</name>
    </ligand>
</feature>
<feature type="binding site" evidence="1">
    <location>
        <begin position="98"/>
        <end position="100"/>
    </location>
    <ligand>
        <name>ATP</name>
        <dbReference type="ChEBI" id="CHEBI:30616"/>
    </ligand>
</feature>
<feature type="binding site" evidence="1">
    <location>
        <position position="107"/>
    </location>
    <ligand>
        <name>ATP</name>
        <dbReference type="ChEBI" id="CHEBI:30616"/>
    </ligand>
</feature>
<feature type="binding site" evidence="1">
    <location>
        <position position="116"/>
    </location>
    <ligand>
        <name>substrate</name>
    </ligand>
</feature>
<feature type="binding site" evidence="1">
    <location>
        <begin position="242"/>
        <end position="243"/>
    </location>
    <ligand>
        <name>ATP</name>
        <dbReference type="ChEBI" id="CHEBI:30616"/>
    </ligand>
</feature>
<feature type="binding site" evidence="1">
    <location>
        <position position="249"/>
    </location>
    <ligand>
        <name>substrate</name>
    </ligand>
</feature>
<feature type="binding site" evidence="1">
    <location>
        <position position="298"/>
    </location>
    <ligand>
        <name>ATP</name>
        <dbReference type="ChEBI" id="CHEBI:30616"/>
    </ligand>
</feature>
<organism>
    <name type="scientific">Vibrio parahaemolyticus serotype O3:K6 (strain RIMD 2210633)</name>
    <dbReference type="NCBI Taxonomy" id="223926"/>
    <lineage>
        <taxon>Bacteria</taxon>
        <taxon>Pseudomonadati</taxon>
        <taxon>Pseudomonadota</taxon>
        <taxon>Gammaproteobacteria</taxon>
        <taxon>Vibrionales</taxon>
        <taxon>Vibrionaceae</taxon>
        <taxon>Vibrio</taxon>
    </lineage>
</organism>
<sequence length="323" mass="36294">MQTNWQPTASIEQLRQRATLIAAIRQFFAERQVMEVDTPAMSHATVTDIHLHTFQTEFVGPGYADGSKLFFMTSPEFHMKRLLAAGSGCIYQINKAFRNEENGRYHNPEFTMLEWYRVGFDHHKLMDEMDDLLQLVLKCGAAQRMTYQQAFIDVLGVCPLEGSMTELKAAASKLGLSDIAEPEEDRDTLLQLLFSVGVENKIGQDVPAFVYDFPASQAALAKINPQDHRVADRFEVYFKGIELANGFHELDNPKEQLARFEQDNAKRIEMGLKPQPIDYHLISALEAGLPDCAGVALGIDRLIMLALGCDHIDQVTAFPFPIA</sequence>
<protein>
    <recommendedName>
        <fullName evidence="1">Elongation factor P--(R)-beta-lysine ligase</fullName>
        <shortName evidence="1">EF-P--(R)-beta-lysine ligase</shortName>
        <ecNumber evidence="1">6.3.2.-</ecNumber>
    </recommendedName>
    <alternativeName>
        <fullName evidence="1">EF-P post-translational modification enzyme A</fullName>
    </alternativeName>
    <alternativeName>
        <fullName evidence="1">EF-P-lysine lysyltransferase</fullName>
    </alternativeName>
</protein>